<accession>Q2PMR4</accession>
<feature type="chain" id="PRO_0000276057" description="Photosystem I reaction center subunit IX">
    <location>
        <begin position="1"/>
        <end position="44"/>
    </location>
</feature>
<feature type="transmembrane region" description="Helical" evidence="1">
    <location>
        <begin position="7"/>
        <end position="27"/>
    </location>
</feature>
<protein>
    <recommendedName>
        <fullName evidence="1">Photosystem I reaction center subunit IX</fullName>
    </recommendedName>
    <alternativeName>
        <fullName evidence="1">PSI-J</fullName>
    </alternativeName>
</protein>
<proteinExistence type="inferred from homology"/>
<organism>
    <name type="scientific">Glycine max</name>
    <name type="common">Soybean</name>
    <name type="synonym">Glycine hispida</name>
    <dbReference type="NCBI Taxonomy" id="3847"/>
    <lineage>
        <taxon>Eukaryota</taxon>
        <taxon>Viridiplantae</taxon>
        <taxon>Streptophyta</taxon>
        <taxon>Embryophyta</taxon>
        <taxon>Tracheophyta</taxon>
        <taxon>Spermatophyta</taxon>
        <taxon>Magnoliopsida</taxon>
        <taxon>eudicotyledons</taxon>
        <taxon>Gunneridae</taxon>
        <taxon>Pentapetalae</taxon>
        <taxon>rosids</taxon>
        <taxon>fabids</taxon>
        <taxon>Fabales</taxon>
        <taxon>Fabaceae</taxon>
        <taxon>Papilionoideae</taxon>
        <taxon>50 kb inversion clade</taxon>
        <taxon>NPAAA clade</taxon>
        <taxon>indigoferoid/millettioid clade</taxon>
        <taxon>Phaseoleae</taxon>
        <taxon>Glycine</taxon>
        <taxon>Glycine subgen. Soja</taxon>
    </lineage>
</organism>
<comment type="function">
    <text evidence="1">May help in the organization of the PsaE and PsaF subunits.</text>
</comment>
<comment type="subcellular location">
    <subcellularLocation>
        <location evidence="1">Plastid</location>
        <location evidence="1">Chloroplast thylakoid membrane</location>
        <topology evidence="1">Single-pass membrane protein</topology>
    </subcellularLocation>
</comment>
<comment type="similarity">
    <text evidence="1">Belongs to the PsaJ family.</text>
</comment>
<evidence type="ECO:0000255" key="1">
    <source>
        <dbReference type="HAMAP-Rule" id="MF_00522"/>
    </source>
</evidence>
<name>PSAJ_SOYBN</name>
<reference key="1">
    <citation type="journal article" date="2005" name="Plant Mol. Biol.">
        <title>Complete chloroplast genome sequence of Glycine max and comparative analyses with other legume genomes.</title>
        <authorList>
            <person name="Saski C."/>
            <person name="Lee S.-B."/>
            <person name="Daniell H."/>
            <person name="Wood T.C."/>
            <person name="Tomkins J."/>
            <person name="Kim H.-G."/>
            <person name="Jansen R.K."/>
        </authorList>
    </citation>
    <scope>NUCLEOTIDE SEQUENCE [LARGE SCALE GENOMIC DNA]</scope>
    <source>
        <strain>cv. PI 437654</strain>
    </source>
</reference>
<keyword id="KW-0150">Chloroplast</keyword>
<keyword id="KW-0472">Membrane</keyword>
<keyword id="KW-0602">Photosynthesis</keyword>
<keyword id="KW-0603">Photosystem I</keyword>
<keyword id="KW-0934">Plastid</keyword>
<keyword id="KW-1185">Reference proteome</keyword>
<keyword id="KW-0793">Thylakoid</keyword>
<keyword id="KW-0812">Transmembrane</keyword>
<keyword id="KW-1133">Transmembrane helix</keyword>
<dbReference type="EMBL" id="DQ317523">
    <property type="protein sequence ID" value="ABC25144.1"/>
    <property type="molecule type" value="Genomic_DNA"/>
</dbReference>
<dbReference type="RefSeq" id="YP_538784.1">
    <property type="nucleotide sequence ID" value="NC_007942.1"/>
</dbReference>
<dbReference type="SMR" id="Q2PMR4"/>
<dbReference type="FunCoup" id="Q2PMR4">
    <property type="interactions" value="48"/>
</dbReference>
<dbReference type="STRING" id="3847.Q2PMR4"/>
<dbReference type="PaxDb" id="3847-GLYMA15G38116.1"/>
<dbReference type="EnsemblPlants" id="KRH11726">
    <property type="protein sequence ID" value="KRH11726"/>
    <property type="gene ID" value="GLYMA_15G126100"/>
</dbReference>
<dbReference type="EnsemblPlants" id="KRH27385">
    <property type="protein sequence ID" value="KRH27385"/>
    <property type="gene ID" value="GLYMA_12G232400"/>
</dbReference>
<dbReference type="GeneID" id="3989318"/>
<dbReference type="Gramene" id="KRH11726">
    <property type="protein sequence ID" value="KRH11726"/>
    <property type="gene ID" value="GLYMA_15G126100"/>
</dbReference>
<dbReference type="Gramene" id="KRH27385">
    <property type="protein sequence ID" value="KRH27385"/>
    <property type="gene ID" value="GLYMA_12G232400"/>
</dbReference>
<dbReference type="KEGG" id="gmx:3989318"/>
<dbReference type="eggNOG" id="ENOG502S79R">
    <property type="taxonomic scope" value="Eukaryota"/>
</dbReference>
<dbReference type="InParanoid" id="Q2PMR4"/>
<dbReference type="OrthoDB" id="1844838at2759"/>
<dbReference type="Proteomes" id="UP000008827">
    <property type="component" value="Chloroplast"/>
</dbReference>
<dbReference type="GO" id="GO:0009535">
    <property type="term" value="C:chloroplast thylakoid membrane"/>
    <property type="evidence" value="ECO:0007669"/>
    <property type="project" value="UniProtKB-SubCell"/>
</dbReference>
<dbReference type="GO" id="GO:0009522">
    <property type="term" value="C:photosystem I"/>
    <property type="evidence" value="ECO:0007669"/>
    <property type="project" value="UniProtKB-KW"/>
</dbReference>
<dbReference type="GO" id="GO:0015979">
    <property type="term" value="P:photosynthesis"/>
    <property type="evidence" value="ECO:0007669"/>
    <property type="project" value="UniProtKB-UniRule"/>
</dbReference>
<dbReference type="FunFam" id="1.20.5.510:FF:000001">
    <property type="entry name" value="Photosystem I reaction center subunit IX"/>
    <property type="match status" value="1"/>
</dbReference>
<dbReference type="Gene3D" id="1.20.5.510">
    <property type="entry name" value="Single helix bin"/>
    <property type="match status" value="1"/>
</dbReference>
<dbReference type="HAMAP" id="MF_00522">
    <property type="entry name" value="PSI_PsaJ"/>
    <property type="match status" value="1"/>
</dbReference>
<dbReference type="InterPro" id="IPR002615">
    <property type="entry name" value="PSI_PsaJ"/>
</dbReference>
<dbReference type="InterPro" id="IPR036062">
    <property type="entry name" value="PSI_PsaJ_sf"/>
</dbReference>
<dbReference type="PANTHER" id="PTHR36082">
    <property type="match status" value="1"/>
</dbReference>
<dbReference type="PANTHER" id="PTHR36082:SF2">
    <property type="entry name" value="PHOTOSYSTEM I REACTION CENTER SUBUNIT IX"/>
    <property type="match status" value="1"/>
</dbReference>
<dbReference type="Pfam" id="PF01701">
    <property type="entry name" value="PSI_PsaJ"/>
    <property type="match status" value="1"/>
</dbReference>
<dbReference type="SUPFAM" id="SSF81544">
    <property type="entry name" value="Subunit IX of photosystem I reaction centre, PsaJ"/>
    <property type="match status" value="1"/>
</dbReference>
<geneLocation type="chloroplast"/>
<gene>
    <name evidence="1" type="primary">psaJ</name>
</gene>
<sequence>MRDLKTYLSVAPVVSTLWFGALAGLLIEINRFFPDALIFPFFSF</sequence>